<keyword id="KW-0249">Electron transport</keyword>
<keyword id="KW-0274">FAD</keyword>
<keyword id="KW-0285">Flavoprotein</keyword>
<keyword id="KW-0813">Transport</keyword>
<sequence length="313" mass="33484">MNTFSQVWVFSDTPSRLPELMNGAQALANQINTFVLNDADGAQAIQLGANHVWKLSGKPDERMIEDYAGVMADTIRQHGADGLVLLPNTRRGKLLAAKLGYRLNAAVSNDASAVSVQDGKATVKHMVYGGLAIGEERIATPYAVLTISSGTFDVAQPDASRTGETHTVEWQAPAVAITRTATQARQSNSVDLDKARLVVSVGRGIGSKENIALAEQLCKAIGAELACSRPVAENEKWMEHERYVGISNLMLKPELYLAVGISGQIQHMVGANASQTIFAINKDKNAPIFQYADYGIVGDAVKILPALTAALAR</sequence>
<organism>
    <name type="scientific">Escherichia coli O81 (strain ED1a)</name>
    <dbReference type="NCBI Taxonomy" id="585397"/>
    <lineage>
        <taxon>Bacteria</taxon>
        <taxon>Pseudomonadati</taxon>
        <taxon>Pseudomonadota</taxon>
        <taxon>Gammaproteobacteria</taxon>
        <taxon>Enterobacterales</taxon>
        <taxon>Enterobacteriaceae</taxon>
        <taxon>Escherichia</taxon>
    </lineage>
</organism>
<proteinExistence type="inferred from homology"/>
<dbReference type="EMBL" id="CU928162">
    <property type="protein sequence ID" value="CAR06264.1"/>
    <property type="molecule type" value="Genomic_DNA"/>
</dbReference>
<dbReference type="RefSeq" id="WP_001091515.1">
    <property type="nucleotide sequence ID" value="NC_011745.1"/>
</dbReference>
<dbReference type="SMR" id="B7MNP9"/>
<dbReference type="KEGG" id="ecq:ECED1_0041"/>
<dbReference type="HOGENOM" id="CLU_034178_0_1_6"/>
<dbReference type="UniPathway" id="UPA00117"/>
<dbReference type="Proteomes" id="UP000000748">
    <property type="component" value="Chromosome"/>
</dbReference>
<dbReference type="GO" id="GO:0009055">
    <property type="term" value="F:electron transfer activity"/>
    <property type="evidence" value="ECO:0007669"/>
    <property type="project" value="InterPro"/>
</dbReference>
<dbReference type="GO" id="GO:0050660">
    <property type="term" value="F:flavin adenine dinucleotide binding"/>
    <property type="evidence" value="ECO:0007669"/>
    <property type="project" value="InterPro"/>
</dbReference>
<dbReference type="GO" id="GO:0009437">
    <property type="term" value="P:carnitine metabolic process"/>
    <property type="evidence" value="ECO:0007669"/>
    <property type="project" value="UniProtKB-UniRule"/>
</dbReference>
<dbReference type="GO" id="GO:0033539">
    <property type="term" value="P:fatty acid beta-oxidation using acyl-CoA dehydrogenase"/>
    <property type="evidence" value="ECO:0007669"/>
    <property type="project" value="TreeGrafter"/>
</dbReference>
<dbReference type="FunFam" id="3.40.50.1220:FF:000004">
    <property type="entry name" value="Electron transfer flavoprotein"/>
    <property type="match status" value="1"/>
</dbReference>
<dbReference type="FunFam" id="3.40.50.620:FF:000067">
    <property type="entry name" value="Protein FixB"/>
    <property type="match status" value="1"/>
</dbReference>
<dbReference type="Gene3D" id="3.40.50.620">
    <property type="entry name" value="HUPs"/>
    <property type="match status" value="1"/>
</dbReference>
<dbReference type="Gene3D" id="3.40.50.1220">
    <property type="entry name" value="TPP-binding domain"/>
    <property type="match status" value="1"/>
</dbReference>
<dbReference type="HAMAP" id="MF_01056">
    <property type="entry name" value="FixB"/>
    <property type="match status" value="1"/>
</dbReference>
<dbReference type="InterPro" id="IPR029035">
    <property type="entry name" value="DHS-like_NAD/FAD-binding_dom"/>
</dbReference>
<dbReference type="InterPro" id="IPR014730">
    <property type="entry name" value="ETF_a/b_N"/>
</dbReference>
<dbReference type="InterPro" id="IPR001308">
    <property type="entry name" value="ETF_a/FixB"/>
</dbReference>
<dbReference type="InterPro" id="IPR014731">
    <property type="entry name" value="ETF_asu_C"/>
</dbReference>
<dbReference type="InterPro" id="IPR018206">
    <property type="entry name" value="ETF_asu_C_CS"/>
</dbReference>
<dbReference type="InterPro" id="IPR023461">
    <property type="entry name" value="FixB"/>
</dbReference>
<dbReference type="InterPro" id="IPR014729">
    <property type="entry name" value="Rossmann-like_a/b/a_fold"/>
</dbReference>
<dbReference type="NCBIfam" id="NF002889">
    <property type="entry name" value="PRK03363.1"/>
    <property type="match status" value="1"/>
</dbReference>
<dbReference type="PANTHER" id="PTHR43153">
    <property type="entry name" value="ELECTRON TRANSFER FLAVOPROTEIN ALPHA"/>
    <property type="match status" value="1"/>
</dbReference>
<dbReference type="PANTHER" id="PTHR43153:SF5">
    <property type="entry name" value="PROTEIN FIXB-RELATED"/>
    <property type="match status" value="1"/>
</dbReference>
<dbReference type="Pfam" id="PF01012">
    <property type="entry name" value="ETF"/>
    <property type="match status" value="1"/>
</dbReference>
<dbReference type="Pfam" id="PF00766">
    <property type="entry name" value="ETF_alpha"/>
    <property type="match status" value="1"/>
</dbReference>
<dbReference type="PIRSF" id="PIRSF000089">
    <property type="entry name" value="Electra_flavoP_a"/>
    <property type="match status" value="1"/>
</dbReference>
<dbReference type="SMART" id="SM00893">
    <property type="entry name" value="ETF"/>
    <property type="match status" value="1"/>
</dbReference>
<dbReference type="SUPFAM" id="SSF52402">
    <property type="entry name" value="Adenine nucleotide alpha hydrolases-like"/>
    <property type="match status" value="1"/>
</dbReference>
<dbReference type="SUPFAM" id="SSF52467">
    <property type="entry name" value="DHS-like NAD/FAD-binding domain"/>
    <property type="match status" value="1"/>
</dbReference>
<dbReference type="PROSITE" id="PS00696">
    <property type="entry name" value="ETF_ALPHA"/>
    <property type="match status" value="1"/>
</dbReference>
<comment type="function">
    <text evidence="1">Required for anaerobic carnitine reduction. May bring reductant to CaiA.</text>
</comment>
<comment type="pathway">
    <text evidence="1">Amine and polyamine metabolism; carnitine metabolism.</text>
</comment>
<comment type="subunit">
    <text evidence="1">Heterodimer of FixA and FixB.</text>
</comment>
<comment type="similarity">
    <text evidence="1">Belongs to the ETF alpha-subunit/FixB family.</text>
</comment>
<accession>B7MNP9</accession>
<protein>
    <recommendedName>
        <fullName evidence="1">Protein FixB</fullName>
    </recommendedName>
</protein>
<evidence type="ECO:0000255" key="1">
    <source>
        <dbReference type="HAMAP-Rule" id="MF_01056"/>
    </source>
</evidence>
<name>FIXB_ECO81</name>
<gene>
    <name evidence="1" type="primary">fixB</name>
    <name type="ordered locus">ECED1_0041</name>
</gene>
<feature type="chain" id="PRO_1000149640" description="Protein FixB">
    <location>
        <begin position="1"/>
        <end position="313"/>
    </location>
</feature>
<feature type="binding site" evidence="1">
    <location>
        <begin position="255"/>
        <end position="283"/>
    </location>
    <ligand>
        <name>FAD</name>
        <dbReference type="ChEBI" id="CHEBI:57692"/>
    </ligand>
</feature>
<reference key="1">
    <citation type="journal article" date="2009" name="PLoS Genet.">
        <title>Organised genome dynamics in the Escherichia coli species results in highly diverse adaptive paths.</title>
        <authorList>
            <person name="Touchon M."/>
            <person name="Hoede C."/>
            <person name="Tenaillon O."/>
            <person name="Barbe V."/>
            <person name="Baeriswyl S."/>
            <person name="Bidet P."/>
            <person name="Bingen E."/>
            <person name="Bonacorsi S."/>
            <person name="Bouchier C."/>
            <person name="Bouvet O."/>
            <person name="Calteau A."/>
            <person name="Chiapello H."/>
            <person name="Clermont O."/>
            <person name="Cruveiller S."/>
            <person name="Danchin A."/>
            <person name="Diard M."/>
            <person name="Dossat C."/>
            <person name="Karoui M.E."/>
            <person name="Frapy E."/>
            <person name="Garry L."/>
            <person name="Ghigo J.M."/>
            <person name="Gilles A.M."/>
            <person name="Johnson J."/>
            <person name="Le Bouguenec C."/>
            <person name="Lescat M."/>
            <person name="Mangenot S."/>
            <person name="Martinez-Jehanne V."/>
            <person name="Matic I."/>
            <person name="Nassif X."/>
            <person name="Oztas S."/>
            <person name="Petit M.A."/>
            <person name="Pichon C."/>
            <person name="Rouy Z."/>
            <person name="Ruf C.S."/>
            <person name="Schneider D."/>
            <person name="Tourret J."/>
            <person name="Vacherie B."/>
            <person name="Vallenet D."/>
            <person name="Medigue C."/>
            <person name="Rocha E.P.C."/>
            <person name="Denamur E."/>
        </authorList>
    </citation>
    <scope>NUCLEOTIDE SEQUENCE [LARGE SCALE GENOMIC DNA]</scope>
    <source>
        <strain>ED1a</strain>
    </source>
</reference>